<name>SYRM_BOVIN</name>
<evidence type="ECO:0000250" key="1">
    <source>
        <dbReference type="UniProtKB" id="P54136"/>
    </source>
</evidence>
<evidence type="ECO:0000250" key="2">
    <source>
        <dbReference type="UniProtKB" id="Q3U186"/>
    </source>
</evidence>
<evidence type="ECO:0000250" key="3">
    <source>
        <dbReference type="UniProtKB" id="Q5T160"/>
    </source>
</evidence>
<evidence type="ECO:0000255" key="4"/>
<evidence type="ECO:0000305" key="5"/>
<gene>
    <name type="primary">RARS2</name>
    <name type="synonym">RARSL</name>
</gene>
<keyword id="KW-0007">Acetylation</keyword>
<keyword id="KW-0030">Aminoacyl-tRNA synthetase</keyword>
<keyword id="KW-0067">ATP-binding</keyword>
<keyword id="KW-0436">Ligase</keyword>
<keyword id="KW-0472">Membrane</keyword>
<keyword id="KW-0496">Mitochondrion</keyword>
<keyword id="KW-0547">Nucleotide-binding</keyword>
<keyword id="KW-0648">Protein biosynthesis</keyword>
<keyword id="KW-1185">Reference proteome</keyword>
<keyword id="KW-0809">Transit peptide</keyword>
<comment type="function">
    <text evidence="3">Catalyzes the attachment of arginine to tRNA(Arg) in a two-step reaction: arginine is first activated by ATP to form Arg-AMP and then transferred to the acceptor end of tRNA(Arg).</text>
</comment>
<comment type="catalytic activity">
    <reaction evidence="3">
        <text>tRNA(Arg) + L-arginine + ATP = L-arginyl-tRNA(Arg) + AMP + diphosphate</text>
        <dbReference type="Rhea" id="RHEA:20301"/>
        <dbReference type="Rhea" id="RHEA-COMP:9658"/>
        <dbReference type="Rhea" id="RHEA-COMP:9673"/>
        <dbReference type="ChEBI" id="CHEBI:30616"/>
        <dbReference type="ChEBI" id="CHEBI:32682"/>
        <dbReference type="ChEBI" id="CHEBI:33019"/>
        <dbReference type="ChEBI" id="CHEBI:78442"/>
        <dbReference type="ChEBI" id="CHEBI:78513"/>
        <dbReference type="ChEBI" id="CHEBI:456215"/>
        <dbReference type="EC" id="6.1.1.19"/>
    </reaction>
</comment>
<comment type="subcellular location">
    <subcellularLocation>
        <location evidence="3">Mitochondrion membrane</location>
    </subcellularLocation>
</comment>
<comment type="similarity">
    <text evidence="5">Belongs to the class-I aminoacyl-tRNA synthetase family.</text>
</comment>
<sequence>MACGFRRSIASQLSRVLDLPPENLIKSISAVPISRKEEVADFQLSVDSLLENNNDHSRPDIQIQAMRLAEKLKCDTVVSEISTGQGTVNFKINRELLTKTVLQQVIEDGSKYGLKSELFSGLPKKRIVVEFSSPNVAKKFHVGHLRSTIIGNFIANLKEALGHQVTRINYLGDWGMQFGLLGTGFQLFGYEEKLQSSPLQHLFEVYVQVNKEAADDKNVAKSAHEFFQRLELGDMQALALWQKFRDLSIDEYMRIYQRLGVHFDEYSGESFYREKSQEVLKLLDSKGLLQKTLKGTAVVDLSGNGDPSSVCTVMRSDGTSLYATRDLAAAIDRMEKYNFDKMIYVTDKGQKKHFQQVFQILQIMGYDWAERCQHVPFGVVQGMKTRRGDVTFLEDVLNEIRLRMLQNMASIKTTKELENPEETAEQVGLAALIIQDFRGFLLSDYQFSWDRVFQSRGDTGVFLQYTHARLHSLEETFGCGYLNDFNTACLQEPQSVSILQHLLRFDEVLYRSSQDLQPRHIVSYLLTLSHLAAVAHRTLHVRNSPPEVAGARLHLFRAVRSVLANGMKLLGITPVCRM</sequence>
<feature type="transit peptide" description="Mitochondrion" evidence="4">
    <location>
        <begin position="1"/>
        <end position="16"/>
    </location>
</feature>
<feature type="chain" id="PRO_0000284070" description="Probable arginine--tRNA ligase, mitochondrial">
    <location>
        <begin position="17"/>
        <end position="578"/>
    </location>
</feature>
<feature type="short sequence motif" description="'HIGH' region">
    <location>
        <begin position="133"/>
        <end position="144"/>
    </location>
</feature>
<feature type="binding site" evidence="1">
    <location>
        <begin position="133"/>
        <end position="135"/>
    </location>
    <ligand>
        <name>L-arginine</name>
        <dbReference type="ChEBI" id="CHEBI:32682"/>
    </ligand>
</feature>
<feature type="binding site" evidence="1">
    <location>
        <position position="144"/>
    </location>
    <ligand>
        <name>L-arginine</name>
        <dbReference type="ChEBI" id="CHEBI:32682"/>
    </ligand>
</feature>
<feature type="binding site" evidence="1">
    <location>
        <position position="322"/>
    </location>
    <ligand>
        <name>L-arginine</name>
        <dbReference type="ChEBI" id="CHEBI:32682"/>
    </ligand>
</feature>
<feature type="binding site" evidence="1">
    <location>
        <position position="326"/>
    </location>
    <ligand>
        <name>L-arginine</name>
        <dbReference type="ChEBI" id="CHEBI:32682"/>
    </ligand>
</feature>
<feature type="binding site" evidence="1">
    <location>
        <position position="350"/>
    </location>
    <ligand>
        <name>L-arginine</name>
        <dbReference type="ChEBI" id="CHEBI:32682"/>
    </ligand>
</feature>
<feature type="modified residue" description="N6-acetyllysine" evidence="2">
    <location>
        <position position="568"/>
    </location>
</feature>
<reference key="1">
    <citation type="submission" date="2006-08" db="EMBL/GenBank/DDBJ databases">
        <authorList>
            <consortium name="NIH - Mammalian Gene Collection (MGC) project"/>
        </authorList>
    </citation>
    <scope>NUCLEOTIDE SEQUENCE [LARGE SCALE MRNA]</scope>
    <source>
        <strain>Hereford</strain>
        <tissue>Fetal cerebellum</tissue>
    </source>
</reference>
<proteinExistence type="evidence at transcript level"/>
<organism>
    <name type="scientific">Bos taurus</name>
    <name type="common">Bovine</name>
    <dbReference type="NCBI Taxonomy" id="9913"/>
    <lineage>
        <taxon>Eukaryota</taxon>
        <taxon>Metazoa</taxon>
        <taxon>Chordata</taxon>
        <taxon>Craniata</taxon>
        <taxon>Vertebrata</taxon>
        <taxon>Euteleostomi</taxon>
        <taxon>Mammalia</taxon>
        <taxon>Eutheria</taxon>
        <taxon>Laurasiatheria</taxon>
        <taxon>Artiodactyla</taxon>
        <taxon>Ruminantia</taxon>
        <taxon>Pecora</taxon>
        <taxon>Bovidae</taxon>
        <taxon>Bovinae</taxon>
        <taxon>Bos</taxon>
    </lineage>
</organism>
<protein>
    <recommendedName>
        <fullName>Probable arginine--tRNA ligase, mitochondrial</fullName>
        <ecNumber evidence="3">6.1.1.19</ecNumber>
    </recommendedName>
    <alternativeName>
        <fullName>Arginyl-tRNA synthetase</fullName>
        <shortName>ArgRS</shortName>
    </alternativeName>
</protein>
<accession>Q0P5H7</accession>
<dbReference type="EC" id="6.1.1.19" evidence="3"/>
<dbReference type="EMBL" id="BC120020">
    <property type="protein sequence ID" value="AAI20021.1"/>
    <property type="molecule type" value="mRNA"/>
</dbReference>
<dbReference type="RefSeq" id="NP_001069346.1">
    <property type="nucleotide sequence ID" value="NM_001075878.1"/>
</dbReference>
<dbReference type="SMR" id="Q0P5H7"/>
<dbReference type="FunCoup" id="Q0P5H7">
    <property type="interactions" value="2504"/>
</dbReference>
<dbReference type="STRING" id="9913.ENSBTAP00000058548"/>
<dbReference type="PaxDb" id="9913-ENSBTAP00000022568"/>
<dbReference type="GeneID" id="525894"/>
<dbReference type="KEGG" id="bta:525894"/>
<dbReference type="CTD" id="57038"/>
<dbReference type="VEuPathDB" id="HostDB:ENSBTAG00000016967"/>
<dbReference type="eggNOG" id="KOG1195">
    <property type="taxonomic scope" value="Eukaryota"/>
</dbReference>
<dbReference type="HOGENOM" id="CLU_006406_6_2_1"/>
<dbReference type="InParanoid" id="Q0P5H7"/>
<dbReference type="OMA" id="YEFKWER"/>
<dbReference type="OrthoDB" id="68056at2759"/>
<dbReference type="TreeFam" id="TF300888"/>
<dbReference type="Proteomes" id="UP000009136">
    <property type="component" value="Chromosome 9"/>
</dbReference>
<dbReference type="Bgee" id="ENSBTAG00000016967">
    <property type="expression patterns" value="Expressed in oocyte and 110 other cell types or tissues"/>
</dbReference>
<dbReference type="GO" id="GO:0031966">
    <property type="term" value="C:mitochondrial membrane"/>
    <property type="evidence" value="ECO:0000250"/>
    <property type="project" value="UniProtKB"/>
</dbReference>
<dbReference type="GO" id="GO:0005739">
    <property type="term" value="C:mitochondrion"/>
    <property type="evidence" value="ECO:0000318"/>
    <property type="project" value="GO_Central"/>
</dbReference>
<dbReference type="GO" id="GO:0004814">
    <property type="term" value="F:arginine-tRNA ligase activity"/>
    <property type="evidence" value="ECO:0000250"/>
    <property type="project" value="UniProtKB"/>
</dbReference>
<dbReference type="GO" id="GO:0005524">
    <property type="term" value="F:ATP binding"/>
    <property type="evidence" value="ECO:0007669"/>
    <property type="project" value="UniProtKB-KW"/>
</dbReference>
<dbReference type="GO" id="GO:0006420">
    <property type="term" value="P:arginyl-tRNA aminoacylation"/>
    <property type="evidence" value="ECO:0000318"/>
    <property type="project" value="GO_Central"/>
</dbReference>
<dbReference type="GO" id="GO:0032543">
    <property type="term" value="P:mitochondrial translation"/>
    <property type="evidence" value="ECO:0000318"/>
    <property type="project" value="GO_Central"/>
</dbReference>
<dbReference type="CDD" id="cd00671">
    <property type="entry name" value="ArgRS_core"/>
    <property type="match status" value="1"/>
</dbReference>
<dbReference type="FunFam" id="1.10.730.10:FF:000006">
    <property type="entry name" value="Arginyl-tRNA synthetase 2, mitochondrial"/>
    <property type="match status" value="1"/>
</dbReference>
<dbReference type="FunFam" id="3.40.50.620:FF:000058">
    <property type="entry name" value="Mitochondrial arginyl-tRNA synthetase"/>
    <property type="match status" value="1"/>
</dbReference>
<dbReference type="FunFam" id="3.30.1360.70:FF:000004">
    <property type="entry name" value="Probable arginine--tRNA ligase, mitochondrial"/>
    <property type="match status" value="1"/>
</dbReference>
<dbReference type="Gene3D" id="3.30.1360.70">
    <property type="entry name" value="Arginyl tRNA synthetase N-terminal domain"/>
    <property type="match status" value="1"/>
</dbReference>
<dbReference type="Gene3D" id="3.40.50.620">
    <property type="entry name" value="HUPs"/>
    <property type="match status" value="1"/>
</dbReference>
<dbReference type="Gene3D" id="1.10.730.10">
    <property type="entry name" value="Isoleucyl-tRNA Synthetase, Domain 1"/>
    <property type="match status" value="1"/>
</dbReference>
<dbReference type="InterPro" id="IPR001412">
    <property type="entry name" value="aa-tRNA-synth_I_CS"/>
</dbReference>
<dbReference type="InterPro" id="IPR001278">
    <property type="entry name" value="Arg-tRNA-ligase"/>
</dbReference>
<dbReference type="InterPro" id="IPR036695">
    <property type="entry name" value="Arg-tRNA-synth_N_sf"/>
</dbReference>
<dbReference type="InterPro" id="IPR035684">
    <property type="entry name" value="ArgRS_core"/>
</dbReference>
<dbReference type="InterPro" id="IPR008909">
    <property type="entry name" value="DALR_anticod-bd"/>
</dbReference>
<dbReference type="InterPro" id="IPR014729">
    <property type="entry name" value="Rossmann-like_a/b/a_fold"/>
</dbReference>
<dbReference type="InterPro" id="IPR009080">
    <property type="entry name" value="tRNAsynth_Ia_anticodon-bd"/>
</dbReference>
<dbReference type="NCBIfam" id="TIGR00456">
    <property type="entry name" value="argS"/>
    <property type="match status" value="1"/>
</dbReference>
<dbReference type="PANTHER" id="PTHR11956:SF11">
    <property type="entry name" value="ARGININE--TRNA LIGASE, MITOCHONDRIAL-RELATED"/>
    <property type="match status" value="1"/>
</dbReference>
<dbReference type="PANTHER" id="PTHR11956">
    <property type="entry name" value="ARGINYL-TRNA SYNTHETASE"/>
    <property type="match status" value="1"/>
</dbReference>
<dbReference type="Pfam" id="PF05746">
    <property type="entry name" value="DALR_1"/>
    <property type="match status" value="1"/>
</dbReference>
<dbReference type="Pfam" id="PF00750">
    <property type="entry name" value="tRNA-synt_1d"/>
    <property type="match status" value="1"/>
</dbReference>
<dbReference type="PRINTS" id="PR01038">
    <property type="entry name" value="TRNASYNTHARG"/>
</dbReference>
<dbReference type="SMART" id="SM00836">
    <property type="entry name" value="DALR_1"/>
    <property type="match status" value="1"/>
</dbReference>
<dbReference type="SUPFAM" id="SSF47323">
    <property type="entry name" value="Anticodon-binding domain of a subclass of class I aminoacyl-tRNA synthetases"/>
    <property type="match status" value="1"/>
</dbReference>
<dbReference type="SUPFAM" id="SSF55190">
    <property type="entry name" value="Arginyl-tRNA synthetase (ArgRS), N-terminal 'additional' domain"/>
    <property type="match status" value="1"/>
</dbReference>
<dbReference type="SUPFAM" id="SSF52374">
    <property type="entry name" value="Nucleotidylyl transferase"/>
    <property type="match status" value="1"/>
</dbReference>
<dbReference type="PROSITE" id="PS00178">
    <property type="entry name" value="AA_TRNA_LIGASE_I"/>
    <property type="match status" value="1"/>
</dbReference>